<comment type="function">
    <text evidence="1">Nucleoside triphosphate pyrophosphatase that hydrolyzes dTTP and UTP. May have a dual role in cell division arrest and in preventing the incorporation of modified nucleotides into cellular nucleic acids.</text>
</comment>
<comment type="catalytic activity">
    <reaction evidence="1">
        <text>dTTP + H2O = dTMP + diphosphate + H(+)</text>
        <dbReference type="Rhea" id="RHEA:28534"/>
        <dbReference type="ChEBI" id="CHEBI:15377"/>
        <dbReference type="ChEBI" id="CHEBI:15378"/>
        <dbReference type="ChEBI" id="CHEBI:33019"/>
        <dbReference type="ChEBI" id="CHEBI:37568"/>
        <dbReference type="ChEBI" id="CHEBI:63528"/>
        <dbReference type="EC" id="3.6.1.9"/>
    </reaction>
</comment>
<comment type="catalytic activity">
    <reaction evidence="1">
        <text>UTP + H2O = UMP + diphosphate + H(+)</text>
        <dbReference type="Rhea" id="RHEA:29395"/>
        <dbReference type="ChEBI" id="CHEBI:15377"/>
        <dbReference type="ChEBI" id="CHEBI:15378"/>
        <dbReference type="ChEBI" id="CHEBI:33019"/>
        <dbReference type="ChEBI" id="CHEBI:46398"/>
        <dbReference type="ChEBI" id="CHEBI:57865"/>
        <dbReference type="EC" id="3.6.1.9"/>
    </reaction>
</comment>
<comment type="cofactor">
    <cofactor evidence="1">
        <name>a divalent metal cation</name>
        <dbReference type="ChEBI" id="CHEBI:60240"/>
    </cofactor>
</comment>
<comment type="subcellular location">
    <subcellularLocation>
        <location evidence="1">Cytoplasm</location>
    </subcellularLocation>
</comment>
<comment type="similarity">
    <text evidence="1">Belongs to the Maf family. YhdE subfamily.</text>
</comment>
<organism>
    <name type="scientific">Bacillus cereus (strain B4264)</name>
    <dbReference type="NCBI Taxonomy" id="405532"/>
    <lineage>
        <taxon>Bacteria</taxon>
        <taxon>Bacillati</taxon>
        <taxon>Bacillota</taxon>
        <taxon>Bacilli</taxon>
        <taxon>Bacillales</taxon>
        <taxon>Bacillaceae</taxon>
        <taxon>Bacillus</taxon>
        <taxon>Bacillus cereus group</taxon>
    </lineage>
</organism>
<name>NTPPA_BACC4</name>
<keyword id="KW-0963">Cytoplasm</keyword>
<keyword id="KW-0378">Hydrolase</keyword>
<keyword id="KW-0546">Nucleotide metabolism</keyword>
<sequence>MRKIILASGSPRRKELLELASVPFEIVVSEVEETIGAYSSPSDIVMSLALQKASAVAENNSDHIVLGADTIVTYESRILGKPSNEDEAKEMLQLLSGKTHEVYTGVAIIAKEKTVTFYERTEVTFWELTEEEIDTYVASKEPLDKAGSYGIQGKGSIFVQNIQGDYYSVVGLPIARLVRELKQFDIDVTHA</sequence>
<dbReference type="EC" id="3.6.1.9" evidence="1"/>
<dbReference type="EMBL" id="CP001176">
    <property type="protein sequence ID" value="ACK63306.1"/>
    <property type="molecule type" value="Genomic_DNA"/>
</dbReference>
<dbReference type="RefSeq" id="WP_001226291.1">
    <property type="nucleotide sequence ID" value="NZ_VEHB01000006.1"/>
</dbReference>
<dbReference type="SMR" id="B7HE87"/>
<dbReference type="KEGG" id="bcb:BCB4264_A4573"/>
<dbReference type="HOGENOM" id="CLU_040416_0_0_9"/>
<dbReference type="Proteomes" id="UP000007096">
    <property type="component" value="Chromosome"/>
</dbReference>
<dbReference type="GO" id="GO:0005737">
    <property type="term" value="C:cytoplasm"/>
    <property type="evidence" value="ECO:0007669"/>
    <property type="project" value="UniProtKB-SubCell"/>
</dbReference>
<dbReference type="GO" id="GO:0036218">
    <property type="term" value="F:dTTP diphosphatase activity"/>
    <property type="evidence" value="ECO:0007669"/>
    <property type="project" value="RHEA"/>
</dbReference>
<dbReference type="GO" id="GO:0036221">
    <property type="term" value="F:UTP diphosphatase activity"/>
    <property type="evidence" value="ECO:0007669"/>
    <property type="project" value="RHEA"/>
</dbReference>
<dbReference type="GO" id="GO:0009117">
    <property type="term" value="P:nucleotide metabolic process"/>
    <property type="evidence" value="ECO:0007669"/>
    <property type="project" value="UniProtKB-KW"/>
</dbReference>
<dbReference type="CDD" id="cd00555">
    <property type="entry name" value="Maf"/>
    <property type="match status" value="1"/>
</dbReference>
<dbReference type="FunFam" id="3.90.950.10:FF:000007">
    <property type="entry name" value="dTTP/UTP pyrophosphatase"/>
    <property type="match status" value="1"/>
</dbReference>
<dbReference type="Gene3D" id="3.90.950.10">
    <property type="match status" value="1"/>
</dbReference>
<dbReference type="HAMAP" id="MF_00528">
    <property type="entry name" value="Maf"/>
    <property type="match status" value="1"/>
</dbReference>
<dbReference type="InterPro" id="IPR029001">
    <property type="entry name" value="ITPase-like_fam"/>
</dbReference>
<dbReference type="InterPro" id="IPR003697">
    <property type="entry name" value="Maf-like"/>
</dbReference>
<dbReference type="NCBIfam" id="TIGR00172">
    <property type="entry name" value="maf"/>
    <property type="match status" value="1"/>
</dbReference>
<dbReference type="PANTHER" id="PTHR43213">
    <property type="entry name" value="BIFUNCTIONAL DTTP/UTP PYROPHOSPHATASE/METHYLTRANSFERASE PROTEIN-RELATED"/>
    <property type="match status" value="1"/>
</dbReference>
<dbReference type="PANTHER" id="PTHR43213:SF5">
    <property type="entry name" value="BIFUNCTIONAL DTTP_UTP PYROPHOSPHATASE_METHYLTRANSFERASE PROTEIN-RELATED"/>
    <property type="match status" value="1"/>
</dbReference>
<dbReference type="Pfam" id="PF02545">
    <property type="entry name" value="Maf"/>
    <property type="match status" value="1"/>
</dbReference>
<dbReference type="PIRSF" id="PIRSF006305">
    <property type="entry name" value="Maf"/>
    <property type="match status" value="1"/>
</dbReference>
<dbReference type="SUPFAM" id="SSF52972">
    <property type="entry name" value="ITPase-like"/>
    <property type="match status" value="1"/>
</dbReference>
<evidence type="ECO:0000255" key="1">
    <source>
        <dbReference type="HAMAP-Rule" id="MF_00528"/>
    </source>
</evidence>
<protein>
    <recommendedName>
        <fullName evidence="1">dTTP/UTP pyrophosphatase</fullName>
        <shortName evidence="1">dTTPase/UTPase</shortName>
        <ecNumber evidence="1">3.6.1.9</ecNumber>
    </recommendedName>
    <alternativeName>
        <fullName evidence="1">Nucleoside triphosphate pyrophosphatase</fullName>
    </alternativeName>
    <alternativeName>
        <fullName evidence="1">Nucleotide pyrophosphatase</fullName>
        <shortName evidence="1">Nucleotide PPase</shortName>
    </alternativeName>
</protein>
<gene>
    <name type="primary">maf</name>
    <name type="ordered locus">BCB4264_A4573</name>
</gene>
<accession>B7HE87</accession>
<proteinExistence type="inferred from homology"/>
<feature type="chain" id="PRO_1000127771" description="dTTP/UTP pyrophosphatase">
    <location>
        <begin position="1"/>
        <end position="191"/>
    </location>
</feature>
<feature type="active site" description="Proton acceptor" evidence="1">
    <location>
        <position position="69"/>
    </location>
</feature>
<feature type="site" description="Important for substrate specificity" evidence="1">
    <location>
        <position position="12"/>
    </location>
</feature>
<feature type="site" description="Important for substrate specificity" evidence="1">
    <location>
        <position position="70"/>
    </location>
</feature>
<feature type="site" description="Important for substrate specificity" evidence="1">
    <location>
        <position position="152"/>
    </location>
</feature>
<reference key="1">
    <citation type="submission" date="2008-10" db="EMBL/GenBank/DDBJ databases">
        <title>Genome sequence of Bacillus cereus B4264.</title>
        <authorList>
            <person name="Dodson R.J."/>
            <person name="Durkin A.S."/>
            <person name="Rosovitz M.J."/>
            <person name="Rasko D.A."/>
            <person name="Hoffmaster A."/>
            <person name="Ravel J."/>
            <person name="Sutton G."/>
        </authorList>
    </citation>
    <scope>NUCLEOTIDE SEQUENCE [LARGE SCALE GENOMIC DNA]</scope>
    <source>
        <strain>B4264</strain>
    </source>
</reference>